<sequence>MIENSSWSMTFEERENRRLQEASMRLEQENDDLAHELVTSKIALRNDLDQAEDKADVLNKELLLTKQRLVETEEEKRKQEEETAQLKEVFRKQLEKAEYEIKKTTAIIAEYKQICSQLSTRLEKQQAASKEELEVVKGKMMACKHCSDIFSKEGALKLAATGREDQGIETDDEKDSLKKQLREMELELAQTKLQLVEAKCKIQELEHQRGALMNEIQAAKNSWFSKTLNSIKTATGTQPLQPAPVTQPPKEST</sequence>
<accession>B7ZAP0</accession>
<accession>B7ZAA4</accession>
<dbReference type="EMBL" id="AK316219">
    <property type="protein sequence ID" value="BAH14590.1"/>
    <property type="molecule type" value="mRNA"/>
</dbReference>
<dbReference type="EMBL" id="AK316355">
    <property type="protein sequence ID" value="BAH14726.1"/>
    <property type="molecule type" value="mRNA"/>
</dbReference>
<dbReference type="EMBL" id="AL008735">
    <property type="status" value="NOT_ANNOTATED_CDS"/>
    <property type="molecule type" value="Genomic_DNA"/>
</dbReference>
<dbReference type="EMBL" id="AL021069">
    <property type="status" value="NOT_ANNOTATED_CDS"/>
    <property type="molecule type" value="Genomic_DNA"/>
</dbReference>
<dbReference type="EMBL" id="AL022171">
    <property type="status" value="NOT_ANNOTATED_CDS"/>
    <property type="molecule type" value="Genomic_DNA"/>
</dbReference>
<dbReference type="EMBL" id="AL022400">
    <property type="status" value="NOT_ANNOTATED_CDS"/>
    <property type="molecule type" value="Genomic_DNA"/>
</dbReference>
<dbReference type="EMBL" id="AL031278">
    <property type="status" value="NOT_ANNOTATED_CDS"/>
    <property type="molecule type" value="Genomic_DNA"/>
</dbReference>
<dbReference type="EMBL" id="AL031286">
    <property type="status" value="NOT_ANNOTATED_CDS"/>
    <property type="molecule type" value="Genomic_DNA"/>
</dbReference>
<dbReference type="EMBL" id="AL136377">
    <property type="status" value="NOT_ANNOTATED_CDS"/>
    <property type="molecule type" value="Genomic_DNA"/>
</dbReference>
<dbReference type="EMBL" id="AL161671">
    <property type="status" value="NOT_ANNOTATED_CDS"/>
    <property type="molecule type" value="Genomic_DNA"/>
</dbReference>
<dbReference type="EMBL" id="AL591108">
    <property type="status" value="NOT_ANNOTATED_CDS"/>
    <property type="molecule type" value="Genomic_DNA"/>
</dbReference>
<dbReference type="EMBL" id="Z99127">
    <property type="status" value="NOT_ANNOTATED_CDS"/>
    <property type="molecule type" value="Genomic_DNA"/>
</dbReference>
<dbReference type="CCDS" id="CCDS55662.1">
    <molecule id="B7ZAP0-1"/>
</dbReference>
<dbReference type="RefSeq" id="NP_001230693.1">
    <molecule id="B7ZAP0-1"/>
    <property type="nucleotide sequence ID" value="NM_001243764.2"/>
</dbReference>
<dbReference type="RefSeq" id="XP_016858487.1">
    <property type="nucleotide sequence ID" value="XM_017002998.1"/>
</dbReference>
<dbReference type="SMR" id="B7ZAP0"/>
<dbReference type="BioGRID" id="115239">
    <property type="interactions" value="139"/>
</dbReference>
<dbReference type="IntAct" id="B7ZAP0">
    <property type="interactions" value="29"/>
</dbReference>
<dbReference type="iPTMnet" id="B7ZAP0"/>
<dbReference type="PhosphoSitePlus" id="B7ZAP0"/>
<dbReference type="BioMuta" id="RABGAP1L"/>
<dbReference type="jPOST" id="B7ZAP0"/>
<dbReference type="MassIVE" id="B7ZAP0"/>
<dbReference type="ProteomicsDB" id="7075">
    <molecule id="B7ZAP0-1"/>
</dbReference>
<dbReference type="Pumba" id="B7ZAP0"/>
<dbReference type="Antibodypedia" id="34402">
    <property type="antibodies" value="77 antibodies from 20 providers"/>
</dbReference>
<dbReference type="DNASU" id="9910"/>
<dbReference type="Ensembl" id="ENST00000367688.3">
    <molecule id="B7ZAP0-1"/>
    <property type="protein sequence ID" value="ENSP00000356661.3"/>
    <property type="gene ID" value="ENSG00000152061.24"/>
</dbReference>
<dbReference type="GeneID" id="9910"/>
<dbReference type="KEGG" id="hsa:9910"/>
<dbReference type="UCSC" id="uc010pmv.3">
    <molecule id="B7ZAP0-1"/>
    <property type="organism name" value="human"/>
</dbReference>
<dbReference type="AGR" id="HGNC:24663"/>
<dbReference type="CTD" id="9910"/>
<dbReference type="DisGeNET" id="9910"/>
<dbReference type="GeneCards" id="RABGAP1L"/>
<dbReference type="HGNC" id="HGNC:24663">
    <property type="gene designation" value="RABGAP1L"/>
</dbReference>
<dbReference type="HPA" id="ENSG00000152061">
    <property type="expression patterns" value="Tissue enhanced (heart)"/>
</dbReference>
<dbReference type="neXtProt" id="NX_B7ZAP0"/>
<dbReference type="OpenTargets" id="ENSG00000152061"/>
<dbReference type="VEuPathDB" id="HostDB:ENSG00000152061"/>
<dbReference type="GeneTree" id="ENSGT00940000154611"/>
<dbReference type="HOGENOM" id="CLU_022409_0_0_1"/>
<dbReference type="OrthoDB" id="295078at2759"/>
<dbReference type="PathwayCommons" id="B7ZAP0"/>
<dbReference type="SignaLink" id="B7ZAP0"/>
<dbReference type="BioGRID-ORCS" id="9910">
    <property type="hits" value="20 hits in 1155 CRISPR screens"/>
</dbReference>
<dbReference type="ChiTaRS" id="RABGAP1L">
    <property type="organism name" value="human"/>
</dbReference>
<dbReference type="GenomeRNAi" id="9910"/>
<dbReference type="Pharos" id="B7ZAP0">
    <property type="development level" value="Tbio"/>
</dbReference>
<dbReference type="Proteomes" id="UP000005640">
    <property type="component" value="Chromosome 1"/>
</dbReference>
<dbReference type="Bgee" id="ENSG00000152061">
    <property type="expression patterns" value="Expressed in calcaneal tendon and 204 other cell types or tissues"/>
</dbReference>
<dbReference type="ExpressionAtlas" id="B7ZAP0">
    <property type="expression patterns" value="baseline and differential"/>
</dbReference>
<dbReference type="PANTHER" id="PTHR47728:SF1">
    <property type="entry name" value="RAB GTPASE ACTIVATING PROTEIN 1 LIKE"/>
    <property type="match status" value="1"/>
</dbReference>
<dbReference type="PANTHER" id="PTHR47728">
    <property type="entry name" value="RAB GTPASE-ACTIVATING PROTEIN 1-LIKE"/>
    <property type="match status" value="1"/>
</dbReference>
<feature type="chain" id="PRO_0000417613" description="Rab GTPase-activating protein 1-like, isoform 10">
    <location>
        <begin position="1"/>
        <end position="253"/>
    </location>
</feature>
<feature type="region of interest" description="Disordered" evidence="2">
    <location>
        <begin position="233"/>
        <end position="253"/>
    </location>
</feature>
<feature type="coiled-coil region" evidence="1">
    <location>
        <begin position="8"/>
        <end position="222"/>
    </location>
</feature>
<feature type="sequence conflict" description="In Ref. 1; BAH14590." evidence="3" ref="1">
    <original>V</original>
    <variation>A</variation>
    <location>
        <position position="89"/>
    </location>
</feature>
<proteinExistence type="evidence at protein level"/>
<protein>
    <recommendedName>
        <fullName>Rab GTPase-activating protein 1-like, isoform 10</fullName>
    </recommendedName>
</protein>
<keyword id="KW-0025">Alternative splicing</keyword>
<keyword id="KW-0175">Coiled coil</keyword>
<keyword id="KW-1267">Proteomics identification</keyword>
<keyword id="KW-1185">Reference proteome</keyword>
<evidence type="ECO:0000255" key="1"/>
<evidence type="ECO:0000256" key="2">
    <source>
        <dbReference type="SAM" id="MobiDB-lite"/>
    </source>
</evidence>
<evidence type="ECO:0000305" key="3"/>
<name>RBG10_HUMAN</name>
<comment type="alternative products">
    <event type="alternative splicing"/>
    <isoform>
        <id>B7ZAP0-1</id>
        <name>10</name>
        <name>D</name>
        <sequence type="displayed"/>
    </isoform>
    <isoform>
        <id>Q5R372-1</id>
        <name>1</name>
        <sequence type="external"/>
    </isoform>
    <isoform>
        <id>Q5R372-2</id>
        <name>2</name>
        <sequence type="external"/>
    </isoform>
    <isoform>
        <id>Q5R372-3</id>
        <name>3</name>
        <sequence type="external"/>
    </isoform>
    <isoform>
        <id>Q5R372-4</id>
        <name>4</name>
        <sequence type="external"/>
    </isoform>
    <isoform>
        <id>Q5R372-5</id>
        <name>5</name>
        <sequence type="external"/>
    </isoform>
    <isoform>
        <id>Q5R372-6</id>
        <name>6</name>
        <sequence type="external"/>
    </isoform>
    <isoform>
        <id>Q5R372-7</id>
        <name>7</name>
        <sequence type="external"/>
    </isoform>
    <isoform>
        <id>Q5R372-8</id>
        <name>8</name>
        <sequence type="external"/>
    </isoform>
    <isoform>
        <id>Q5R372-9</id>
        <name>9</name>
        <sequence type="external"/>
    </isoform>
</comment>
<organism>
    <name type="scientific">Homo sapiens</name>
    <name type="common">Human</name>
    <dbReference type="NCBI Taxonomy" id="9606"/>
    <lineage>
        <taxon>Eukaryota</taxon>
        <taxon>Metazoa</taxon>
        <taxon>Chordata</taxon>
        <taxon>Craniata</taxon>
        <taxon>Vertebrata</taxon>
        <taxon>Euteleostomi</taxon>
        <taxon>Mammalia</taxon>
        <taxon>Eutheria</taxon>
        <taxon>Euarchontoglires</taxon>
        <taxon>Primates</taxon>
        <taxon>Haplorrhini</taxon>
        <taxon>Catarrhini</taxon>
        <taxon>Hominidae</taxon>
        <taxon>Homo</taxon>
    </lineage>
</organism>
<gene>
    <name type="primary">RABGAP1L</name>
    <name type="synonym">HHL</name>
    <name type="synonym">KIAA0471</name>
</gene>
<reference key="1">
    <citation type="journal article" date="2004" name="Nat. Genet.">
        <title>Complete sequencing and characterization of 21,243 full-length human cDNAs.</title>
        <authorList>
            <person name="Ota T."/>
            <person name="Suzuki Y."/>
            <person name="Nishikawa T."/>
            <person name="Otsuki T."/>
            <person name="Sugiyama T."/>
            <person name="Irie R."/>
            <person name="Wakamatsu A."/>
            <person name="Hayashi K."/>
            <person name="Sato H."/>
            <person name="Nagai K."/>
            <person name="Kimura K."/>
            <person name="Makita H."/>
            <person name="Sekine M."/>
            <person name="Obayashi M."/>
            <person name="Nishi T."/>
            <person name="Shibahara T."/>
            <person name="Tanaka T."/>
            <person name="Ishii S."/>
            <person name="Yamamoto J."/>
            <person name="Saito K."/>
            <person name="Kawai Y."/>
            <person name="Isono Y."/>
            <person name="Nakamura Y."/>
            <person name="Nagahari K."/>
            <person name="Murakami K."/>
            <person name="Yasuda T."/>
            <person name="Iwayanagi T."/>
            <person name="Wagatsuma M."/>
            <person name="Shiratori A."/>
            <person name="Sudo H."/>
            <person name="Hosoiri T."/>
            <person name="Kaku Y."/>
            <person name="Kodaira H."/>
            <person name="Kondo H."/>
            <person name="Sugawara M."/>
            <person name="Takahashi M."/>
            <person name="Kanda K."/>
            <person name="Yokoi T."/>
            <person name="Furuya T."/>
            <person name="Kikkawa E."/>
            <person name="Omura Y."/>
            <person name="Abe K."/>
            <person name="Kamihara K."/>
            <person name="Katsuta N."/>
            <person name="Sato K."/>
            <person name="Tanikawa M."/>
            <person name="Yamazaki M."/>
            <person name="Ninomiya K."/>
            <person name="Ishibashi T."/>
            <person name="Yamashita H."/>
            <person name="Murakawa K."/>
            <person name="Fujimori K."/>
            <person name="Tanai H."/>
            <person name="Kimata M."/>
            <person name="Watanabe M."/>
            <person name="Hiraoka S."/>
            <person name="Chiba Y."/>
            <person name="Ishida S."/>
            <person name="Ono Y."/>
            <person name="Takiguchi S."/>
            <person name="Watanabe S."/>
            <person name="Yosida M."/>
            <person name="Hotuta T."/>
            <person name="Kusano J."/>
            <person name="Kanehori K."/>
            <person name="Takahashi-Fujii A."/>
            <person name="Hara H."/>
            <person name="Tanase T.-O."/>
            <person name="Nomura Y."/>
            <person name="Togiya S."/>
            <person name="Komai F."/>
            <person name="Hara R."/>
            <person name="Takeuchi K."/>
            <person name="Arita M."/>
            <person name="Imose N."/>
            <person name="Musashino K."/>
            <person name="Yuuki H."/>
            <person name="Oshima A."/>
            <person name="Sasaki N."/>
            <person name="Aotsuka S."/>
            <person name="Yoshikawa Y."/>
            <person name="Matsunawa H."/>
            <person name="Ichihara T."/>
            <person name="Shiohata N."/>
            <person name="Sano S."/>
            <person name="Moriya S."/>
            <person name="Momiyama H."/>
            <person name="Satoh N."/>
            <person name="Takami S."/>
            <person name="Terashima Y."/>
            <person name="Suzuki O."/>
            <person name="Nakagawa S."/>
            <person name="Senoh A."/>
            <person name="Mizoguchi H."/>
            <person name="Goto Y."/>
            <person name="Shimizu F."/>
            <person name="Wakebe H."/>
            <person name="Hishigaki H."/>
            <person name="Watanabe T."/>
            <person name="Sugiyama A."/>
            <person name="Takemoto M."/>
            <person name="Kawakami B."/>
            <person name="Yamazaki M."/>
            <person name="Watanabe K."/>
            <person name="Kumagai A."/>
            <person name="Itakura S."/>
            <person name="Fukuzumi Y."/>
            <person name="Fujimori Y."/>
            <person name="Komiyama M."/>
            <person name="Tashiro H."/>
            <person name="Tanigami A."/>
            <person name="Fujiwara T."/>
            <person name="Ono T."/>
            <person name="Yamada K."/>
            <person name="Fujii Y."/>
            <person name="Ozaki K."/>
            <person name="Hirao M."/>
            <person name="Ohmori Y."/>
            <person name="Kawabata A."/>
            <person name="Hikiji T."/>
            <person name="Kobatake N."/>
            <person name="Inagaki H."/>
            <person name="Ikema Y."/>
            <person name="Okamoto S."/>
            <person name="Okitani R."/>
            <person name="Kawakami T."/>
            <person name="Noguchi S."/>
            <person name="Itoh T."/>
            <person name="Shigeta K."/>
            <person name="Senba T."/>
            <person name="Matsumura K."/>
            <person name="Nakajima Y."/>
            <person name="Mizuno T."/>
            <person name="Morinaga M."/>
            <person name="Sasaki M."/>
            <person name="Togashi T."/>
            <person name="Oyama M."/>
            <person name="Hata H."/>
            <person name="Watanabe M."/>
            <person name="Komatsu T."/>
            <person name="Mizushima-Sugano J."/>
            <person name="Satoh T."/>
            <person name="Shirai Y."/>
            <person name="Takahashi Y."/>
            <person name="Nakagawa K."/>
            <person name="Okumura K."/>
            <person name="Nagase T."/>
            <person name="Nomura N."/>
            <person name="Kikuchi H."/>
            <person name="Masuho Y."/>
            <person name="Yamashita R."/>
            <person name="Nakai K."/>
            <person name="Yada T."/>
            <person name="Nakamura Y."/>
            <person name="Ohara O."/>
            <person name="Isogai T."/>
            <person name="Sugano S."/>
        </authorList>
    </citation>
    <scope>NUCLEOTIDE SEQUENCE [LARGE SCALE MRNA] (ISOFORM 10)</scope>
    <source>
        <tissue>Synovial cell</tissue>
    </source>
</reference>
<reference key="2">
    <citation type="journal article" date="2006" name="Nature">
        <title>The DNA sequence and biological annotation of human chromosome 1.</title>
        <authorList>
            <person name="Gregory S.G."/>
            <person name="Barlow K.F."/>
            <person name="McLay K.E."/>
            <person name="Kaul R."/>
            <person name="Swarbreck D."/>
            <person name="Dunham A."/>
            <person name="Scott C.E."/>
            <person name="Howe K.L."/>
            <person name="Woodfine K."/>
            <person name="Spencer C.C.A."/>
            <person name="Jones M.C."/>
            <person name="Gillson C."/>
            <person name="Searle S."/>
            <person name="Zhou Y."/>
            <person name="Kokocinski F."/>
            <person name="McDonald L."/>
            <person name="Evans R."/>
            <person name="Phillips K."/>
            <person name="Atkinson A."/>
            <person name="Cooper R."/>
            <person name="Jones C."/>
            <person name="Hall R.E."/>
            <person name="Andrews T.D."/>
            <person name="Lloyd C."/>
            <person name="Ainscough R."/>
            <person name="Almeida J.P."/>
            <person name="Ambrose K.D."/>
            <person name="Anderson F."/>
            <person name="Andrew R.W."/>
            <person name="Ashwell R.I.S."/>
            <person name="Aubin K."/>
            <person name="Babbage A.K."/>
            <person name="Bagguley C.L."/>
            <person name="Bailey J."/>
            <person name="Beasley H."/>
            <person name="Bethel G."/>
            <person name="Bird C.P."/>
            <person name="Bray-Allen S."/>
            <person name="Brown J.Y."/>
            <person name="Brown A.J."/>
            <person name="Buckley D."/>
            <person name="Burton J."/>
            <person name="Bye J."/>
            <person name="Carder C."/>
            <person name="Chapman J.C."/>
            <person name="Clark S.Y."/>
            <person name="Clarke G."/>
            <person name="Clee C."/>
            <person name="Cobley V."/>
            <person name="Collier R.E."/>
            <person name="Corby N."/>
            <person name="Coville G.J."/>
            <person name="Davies J."/>
            <person name="Deadman R."/>
            <person name="Dunn M."/>
            <person name="Earthrowl M."/>
            <person name="Ellington A.G."/>
            <person name="Errington H."/>
            <person name="Frankish A."/>
            <person name="Frankland J."/>
            <person name="French L."/>
            <person name="Garner P."/>
            <person name="Garnett J."/>
            <person name="Gay L."/>
            <person name="Ghori M.R.J."/>
            <person name="Gibson R."/>
            <person name="Gilby L.M."/>
            <person name="Gillett W."/>
            <person name="Glithero R.J."/>
            <person name="Grafham D.V."/>
            <person name="Griffiths C."/>
            <person name="Griffiths-Jones S."/>
            <person name="Grocock R."/>
            <person name="Hammond S."/>
            <person name="Harrison E.S.I."/>
            <person name="Hart E."/>
            <person name="Haugen E."/>
            <person name="Heath P.D."/>
            <person name="Holmes S."/>
            <person name="Holt K."/>
            <person name="Howden P.J."/>
            <person name="Hunt A.R."/>
            <person name="Hunt S.E."/>
            <person name="Hunter G."/>
            <person name="Isherwood J."/>
            <person name="James R."/>
            <person name="Johnson C."/>
            <person name="Johnson D."/>
            <person name="Joy A."/>
            <person name="Kay M."/>
            <person name="Kershaw J.K."/>
            <person name="Kibukawa M."/>
            <person name="Kimberley A.M."/>
            <person name="King A."/>
            <person name="Knights A.J."/>
            <person name="Lad H."/>
            <person name="Laird G."/>
            <person name="Lawlor S."/>
            <person name="Leongamornlert D.A."/>
            <person name="Lloyd D.M."/>
            <person name="Loveland J."/>
            <person name="Lovell J."/>
            <person name="Lush M.J."/>
            <person name="Lyne R."/>
            <person name="Martin S."/>
            <person name="Mashreghi-Mohammadi M."/>
            <person name="Matthews L."/>
            <person name="Matthews N.S.W."/>
            <person name="McLaren S."/>
            <person name="Milne S."/>
            <person name="Mistry S."/>
            <person name="Moore M.J.F."/>
            <person name="Nickerson T."/>
            <person name="O'Dell C.N."/>
            <person name="Oliver K."/>
            <person name="Palmeiri A."/>
            <person name="Palmer S.A."/>
            <person name="Parker A."/>
            <person name="Patel D."/>
            <person name="Pearce A.V."/>
            <person name="Peck A.I."/>
            <person name="Pelan S."/>
            <person name="Phelps K."/>
            <person name="Phillimore B.J."/>
            <person name="Plumb R."/>
            <person name="Rajan J."/>
            <person name="Raymond C."/>
            <person name="Rouse G."/>
            <person name="Saenphimmachak C."/>
            <person name="Sehra H.K."/>
            <person name="Sheridan E."/>
            <person name="Shownkeen R."/>
            <person name="Sims S."/>
            <person name="Skuce C.D."/>
            <person name="Smith M."/>
            <person name="Steward C."/>
            <person name="Subramanian S."/>
            <person name="Sycamore N."/>
            <person name="Tracey A."/>
            <person name="Tromans A."/>
            <person name="Van Helmond Z."/>
            <person name="Wall M."/>
            <person name="Wallis J.M."/>
            <person name="White S."/>
            <person name="Whitehead S.L."/>
            <person name="Wilkinson J.E."/>
            <person name="Willey D.L."/>
            <person name="Williams H."/>
            <person name="Wilming L."/>
            <person name="Wray P.W."/>
            <person name="Wu Z."/>
            <person name="Coulson A."/>
            <person name="Vaudin M."/>
            <person name="Sulston J.E."/>
            <person name="Durbin R.M."/>
            <person name="Hubbard T."/>
            <person name="Wooster R."/>
            <person name="Dunham I."/>
            <person name="Carter N.P."/>
            <person name="McVean G."/>
            <person name="Ross M.T."/>
            <person name="Harrow J."/>
            <person name="Olson M.V."/>
            <person name="Beck S."/>
            <person name="Rogers J."/>
            <person name="Bentley D.R."/>
        </authorList>
    </citation>
    <scope>NUCLEOTIDE SEQUENCE [LARGE SCALE GENOMIC DNA]</scope>
</reference>
<reference key="3">
    <citation type="journal article" date="2011" name="BMC Syst. Biol.">
        <title>Initial characterization of the human central proteome.</title>
        <authorList>
            <person name="Burkard T.R."/>
            <person name="Planyavsky M."/>
            <person name="Kaupe I."/>
            <person name="Breitwieser F.P."/>
            <person name="Buerckstuemmer T."/>
            <person name="Bennett K.L."/>
            <person name="Superti-Furga G."/>
            <person name="Colinge J."/>
        </authorList>
    </citation>
    <scope>IDENTIFICATION BY MASS SPECTROMETRY [LARGE SCALE ANALYSIS]</scope>
</reference>